<name>RPOA_COFAR</name>
<proteinExistence type="inferred from homology"/>
<geneLocation type="chloroplast"/>
<accession>A0A367</accession>
<dbReference type="EC" id="2.7.7.6" evidence="1"/>
<dbReference type="EMBL" id="EF044213">
    <property type="protein sequence ID" value="ABJ89710.1"/>
    <property type="molecule type" value="Genomic_DNA"/>
</dbReference>
<dbReference type="RefSeq" id="YP_817514.1">
    <property type="nucleotide sequence ID" value="NC_008535.1"/>
</dbReference>
<dbReference type="SMR" id="A0A367"/>
<dbReference type="GeneID" id="4421760"/>
<dbReference type="OrthoDB" id="360088at2759"/>
<dbReference type="Proteomes" id="UP000515148">
    <property type="component" value="Chloroplast Pltd"/>
</dbReference>
<dbReference type="GO" id="GO:0009507">
    <property type="term" value="C:chloroplast"/>
    <property type="evidence" value="ECO:0007669"/>
    <property type="project" value="UniProtKB-SubCell"/>
</dbReference>
<dbReference type="GO" id="GO:0000428">
    <property type="term" value="C:DNA-directed RNA polymerase complex"/>
    <property type="evidence" value="ECO:0007669"/>
    <property type="project" value="UniProtKB-KW"/>
</dbReference>
<dbReference type="GO" id="GO:0005739">
    <property type="term" value="C:mitochondrion"/>
    <property type="evidence" value="ECO:0007669"/>
    <property type="project" value="GOC"/>
</dbReference>
<dbReference type="GO" id="GO:0003677">
    <property type="term" value="F:DNA binding"/>
    <property type="evidence" value="ECO:0007669"/>
    <property type="project" value="UniProtKB-UniRule"/>
</dbReference>
<dbReference type="GO" id="GO:0003899">
    <property type="term" value="F:DNA-directed RNA polymerase activity"/>
    <property type="evidence" value="ECO:0007669"/>
    <property type="project" value="UniProtKB-UniRule"/>
</dbReference>
<dbReference type="GO" id="GO:0046983">
    <property type="term" value="F:protein dimerization activity"/>
    <property type="evidence" value="ECO:0007669"/>
    <property type="project" value="InterPro"/>
</dbReference>
<dbReference type="GO" id="GO:0006351">
    <property type="term" value="P:DNA-templated transcription"/>
    <property type="evidence" value="ECO:0007669"/>
    <property type="project" value="UniProtKB-UniRule"/>
</dbReference>
<dbReference type="CDD" id="cd06928">
    <property type="entry name" value="RNAP_alpha_NTD"/>
    <property type="match status" value="1"/>
</dbReference>
<dbReference type="FunFam" id="1.10.150.20:FF:000021">
    <property type="entry name" value="DNA-directed RNA polymerase subunit alpha"/>
    <property type="match status" value="1"/>
</dbReference>
<dbReference type="FunFam" id="2.170.120.12:FF:000001">
    <property type="entry name" value="DNA-directed RNA polymerase subunit alpha"/>
    <property type="match status" value="1"/>
</dbReference>
<dbReference type="FunFam" id="3.30.1360.10:FF:000039">
    <property type="entry name" value="DNA-directed RNA polymerase subunit alpha"/>
    <property type="match status" value="1"/>
</dbReference>
<dbReference type="Gene3D" id="1.10.150.20">
    <property type="entry name" value="5' to 3' exonuclease, C-terminal subdomain"/>
    <property type="match status" value="1"/>
</dbReference>
<dbReference type="Gene3D" id="2.170.120.12">
    <property type="entry name" value="DNA-directed RNA polymerase, insert domain"/>
    <property type="match status" value="1"/>
</dbReference>
<dbReference type="Gene3D" id="3.30.1360.10">
    <property type="entry name" value="RNA polymerase, RBP11-like subunit"/>
    <property type="match status" value="1"/>
</dbReference>
<dbReference type="HAMAP" id="MF_00059">
    <property type="entry name" value="RNApol_bact_RpoA"/>
    <property type="match status" value="1"/>
</dbReference>
<dbReference type="InterPro" id="IPR011262">
    <property type="entry name" value="DNA-dir_RNA_pol_insert"/>
</dbReference>
<dbReference type="InterPro" id="IPR011263">
    <property type="entry name" value="DNA-dir_RNA_pol_RpoA/D/Rpb3"/>
</dbReference>
<dbReference type="InterPro" id="IPR011773">
    <property type="entry name" value="DNA-dir_RpoA"/>
</dbReference>
<dbReference type="InterPro" id="IPR036603">
    <property type="entry name" value="RBP11-like"/>
</dbReference>
<dbReference type="InterPro" id="IPR011260">
    <property type="entry name" value="RNAP_asu_C"/>
</dbReference>
<dbReference type="InterPro" id="IPR036643">
    <property type="entry name" value="RNApol_insert_sf"/>
</dbReference>
<dbReference type="NCBIfam" id="TIGR02027">
    <property type="entry name" value="rpoA"/>
    <property type="match status" value="1"/>
</dbReference>
<dbReference type="Pfam" id="PF01000">
    <property type="entry name" value="RNA_pol_A_bac"/>
    <property type="match status" value="1"/>
</dbReference>
<dbReference type="Pfam" id="PF03118">
    <property type="entry name" value="RNA_pol_A_CTD"/>
    <property type="match status" value="1"/>
</dbReference>
<dbReference type="Pfam" id="PF01193">
    <property type="entry name" value="RNA_pol_L"/>
    <property type="match status" value="1"/>
</dbReference>
<dbReference type="SMART" id="SM00662">
    <property type="entry name" value="RPOLD"/>
    <property type="match status" value="1"/>
</dbReference>
<dbReference type="SUPFAM" id="SSF47789">
    <property type="entry name" value="C-terminal domain of RNA polymerase alpha subunit"/>
    <property type="match status" value="1"/>
</dbReference>
<dbReference type="SUPFAM" id="SSF56553">
    <property type="entry name" value="Insert subdomain of RNA polymerase alpha subunit"/>
    <property type="match status" value="1"/>
</dbReference>
<dbReference type="SUPFAM" id="SSF55257">
    <property type="entry name" value="RBP11-like subunits of RNA polymerase"/>
    <property type="match status" value="1"/>
</dbReference>
<protein>
    <recommendedName>
        <fullName evidence="1">DNA-directed RNA polymerase subunit alpha</fullName>
        <shortName evidence="1">PEP</shortName>
        <ecNumber evidence="1">2.7.7.6</ecNumber>
    </recommendedName>
    <alternativeName>
        <fullName evidence="1">Plastid-encoded RNA polymerase subunit alpha</fullName>
        <shortName evidence="1">RNA polymerase subunit alpha</shortName>
    </alternativeName>
</protein>
<comment type="function">
    <text evidence="1">DNA-dependent RNA polymerase catalyzes the transcription of DNA into RNA using the four ribonucleoside triphosphates as substrates.</text>
</comment>
<comment type="catalytic activity">
    <reaction evidence="1">
        <text>RNA(n) + a ribonucleoside 5'-triphosphate = RNA(n+1) + diphosphate</text>
        <dbReference type="Rhea" id="RHEA:21248"/>
        <dbReference type="Rhea" id="RHEA-COMP:14527"/>
        <dbReference type="Rhea" id="RHEA-COMP:17342"/>
        <dbReference type="ChEBI" id="CHEBI:33019"/>
        <dbReference type="ChEBI" id="CHEBI:61557"/>
        <dbReference type="ChEBI" id="CHEBI:140395"/>
        <dbReference type="EC" id="2.7.7.6"/>
    </reaction>
</comment>
<comment type="subunit">
    <text evidence="1">In plastids the minimal PEP RNA polymerase catalytic core is composed of four subunits: alpha, beta, beta', and beta''. When a (nuclear-encoded) sigma factor is associated with the core the holoenzyme is formed, which can initiate transcription.</text>
</comment>
<comment type="subcellular location">
    <subcellularLocation>
        <location>Plastid</location>
        <location>Chloroplast</location>
    </subcellularLocation>
</comment>
<comment type="domain">
    <text evidence="1">The N-terminal domain is essential for RNAP assembly and basal transcription, whereas the C-terminal domain is involved in interaction with transcriptional regulators and with upstream promoter elements.</text>
</comment>
<comment type="similarity">
    <text evidence="1">Belongs to the RNA polymerase alpha chain family.</text>
</comment>
<reference key="1">
    <citation type="journal article" date="2007" name="Plant Biotechnol. J.">
        <title>The complete nucleotide sequence of the coffee (Coffea arabica L.) chloroplast genome: organization and implications for biotechnology and phylogenetic relationships amongst angiosperms.</title>
        <authorList>
            <person name="Samson N."/>
            <person name="Bausher M.G."/>
            <person name="Lee S.-B."/>
            <person name="Jansen R.K."/>
            <person name="Daniell H."/>
        </authorList>
    </citation>
    <scope>NUCLEOTIDE SEQUENCE [LARGE SCALE GENOMIC DNA]</scope>
</reference>
<organism>
    <name type="scientific">Coffea arabica</name>
    <name type="common">Arabian coffee</name>
    <dbReference type="NCBI Taxonomy" id="13443"/>
    <lineage>
        <taxon>Eukaryota</taxon>
        <taxon>Viridiplantae</taxon>
        <taxon>Streptophyta</taxon>
        <taxon>Embryophyta</taxon>
        <taxon>Tracheophyta</taxon>
        <taxon>Spermatophyta</taxon>
        <taxon>Magnoliopsida</taxon>
        <taxon>eudicotyledons</taxon>
        <taxon>Gunneridae</taxon>
        <taxon>Pentapetalae</taxon>
        <taxon>asterids</taxon>
        <taxon>lamiids</taxon>
        <taxon>Gentianales</taxon>
        <taxon>Rubiaceae</taxon>
        <taxon>Ixoroideae</taxon>
        <taxon>Gardenieae complex</taxon>
        <taxon>Bertiereae - Coffeeae clade</taxon>
        <taxon>Coffeeae</taxon>
        <taxon>Coffea</taxon>
    </lineage>
</organism>
<keyword id="KW-0150">Chloroplast</keyword>
<keyword id="KW-0240">DNA-directed RNA polymerase</keyword>
<keyword id="KW-0548">Nucleotidyltransferase</keyword>
<keyword id="KW-0934">Plastid</keyword>
<keyword id="KW-1185">Reference proteome</keyword>
<keyword id="KW-0804">Transcription</keyword>
<keyword id="KW-0808">Transferase</keyword>
<sequence>MVREKITVSTRTLEWKCVELRTDSKRLYYGRFILSPLMKGQADTIGIAMRRALLGEIEGTCITRVKSEKVAHEYSTIAGIQESVHEILMNLKEIVFRSNLYGTCDASICVRGPGYVTAQDIVLPPYVEIVDNTQHIARLMEPINLCIRLEIERNRGYLIKTPQNFQDGSYPIDAVFMPIRNANYSIHSYGNGNEKQEILFLEIWTNGSLTPKEALHQASRNLIDLFIPFLHMEEQNSHLENNQHTVPLAPFFFHDKLDKLRKNKKEIALKSIFIDQSELPPRIYNCLKRSNIYTLLDLLNNSQENLMKIEHFHIEDVKEILGILEKQLVIFLPKK</sequence>
<gene>
    <name evidence="1" type="primary">rpoA</name>
</gene>
<feature type="chain" id="PRO_0000275686" description="DNA-directed RNA polymerase subunit alpha">
    <location>
        <begin position="1"/>
        <end position="335"/>
    </location>
</feature>
<feature type="region of interest" description="Alpha N-terminal domain (alpha-NTD)" evidence="1">
    <location>
        <begin position="1"/>
        <end position="233"/>
    </location>
</feature>
<feature type="region of interest" description="Alpha C-terminal domain (alpha-CTD)" evidence="1">
    <location>
        <begin position="265"/>
        <end position="335"/>
    </location>
</feature>
<evidence type="ECO:0000255" key="1">
    <source>
        <dbReference type="HAMAP-Rule" id="MF_00059"/>
    </source>
</evidence>